<reference key="1">
    <citation type="journal article" date="2007" name="Proc. Natl. Acad. Sci. U.S.A.">
        <title>Genome and proteome of long-chain alkane degrading Geobacillus thermodenitrificans NG80-2 isolated from a deep-subsurface oil reservoir.</title>
        <authorList>
            <person name="Feng L."/>
            <person name="Wang W."/>
            <person name="Cheng J."/>
            <person name="Ren Y."/>
            <person name="Zhao G."/>
            <person name="Gao C."/>
            <person name="Tang Y."/>
            <person name="Liu X."/>
            <person name="Han W."/>
            <person name="Peng X."/>
            <person name="Liu R."/>
            <person name="Wang L."/>
        </authorList>
    </citation>
    <scope>NUCLEOTIDE SEQUENCE [LARGE SCALE GENOMIC DNA]</scope>
    <source>
        <strain>NG80-2</strain>
    </source>
</reference>
<proteinExistence type="inferred from homology"/>
<comment type="function">
    <text evidence="1">This is one of the proteins that bind and probably mediate the attachment of the 5S RNA into the large ribosomal subunit, where it forms part of the central protuberance. In the 70S ribosome it contacts protein S13 of the 30S subunit (bridge B1b), connecting the 2 subunits; this bridge is implicated in subunit movement. Contacts the P site tRNA; the 5S rRNA and some of its associated proteins might help stabilize positioning of ribosome-bound tRNAs.</text>
</comment>
<comment type="subunit">
    <text evidence="1">Part of the 50S ribosomal subunit; part of the 5S rRNA/L5/L18/L25 subcomplex. Contacts the 5S rRNA and the P site tRNA. Forms a bridge to the 30S subunit in the 70S ribosome.</text>
</comment>
<comment type="similarity">
    <text evidence="1">Belongs to the universal ribosomal protein uL5 family.</text>
</comment>
<dbReference type="EMBL" id="CP000557">
    <property type="protein sequence ID" value="ABO65504.1"/>
    <property type="molecule type" value="Genomic_DNA"/>
</dbReference>
<dbReference type="RefSeq" id="WP_008881932.1">
    <property type="nucleotide sequence ID" value="NC_009328.1"/>
</dbReference>
<dbReference type="SMR" id="A4IJK0"/>
<dbReference type="GeneID" id="87622314"/>
<dbReference type="KEGG" id="gtn:GTNG_0117"/>
<dbReference type="eggNOG" id="COG0094">
    <property type="taxonomic scope" value="Bacteria"/>
</dbReference>
<dbReference type="HOGENOM" id="CLU_061015_2_1_9"/>
<dbReference type="Proteomes" id="UP000001578">
    <property type="component" value="Chromosome"/>
</dbReference>
<dbReference type="GO" id="GO:1990904">
    <property type="term" value="C:ribonucleoprotein complex"/>
    <property type="evidence" value="ECO:0007669"/>
    <property type="project" value="UniProtKB-KW"/>
</dbReference>
<dbReference type="GO" id="GO:0005840">
    <property type="term" value="C:ribosome"/>
    <property type="evidence" value="ECO:0007669"/>
    <property type="project" value="UniProtKB-KW"/>
</dbReference>
<dbReference type="GO" id="GO:0019843">
    <property type="term" value="F:rRNA binding"/>
    <property type="evidence" value="ECO:0007669"/>
    <property type="project" value="UniProtKB-UniRule"/>
</dbReference>
<dbReference type="GO" id="GO:0003735">
    <property type="term" value="F:structural constituent of ribosome"/>
    <property type="evidence" value="ECO:0007669"/>
    <property type="project" value="InterPro"/>
</dbReference>
<dbReference type="GO" id="GO:0000049">
    <property type="term" value="F:tRNA binding"/>
    <property type="evidence" value="ECO:0007669"/>
    <property type="project" value="UniProtKB-UniRule"/>
</dbReference>
<dbReference type="GO" id="GO:0006412">
    <property type="term" value="P:translation"/>
    <property type="evidence" value="ECO:0007669"/>
    <property type="project" value="UniProtKB-UniRule"/>
</dbReference>
<dbReference type="FunFam" id="3.30.1440.10:FF:000001">
    <property type="entry name" value="50S ribosomal protein L5"/>
    <property type="match status" value="1"/>
</dbReference>
<dbReference type="Gene3D" id="3.30.1440.10">
    <property type="match status" value="1"/>
</dbReference>
<dbReference type="HAMAP" id="MF_01333_B">
    <property type="entry name" value="Ribosomal_uL5_B"/>
    <property type="match status" value="1"/>
</dbReference>
<dbReference type="InterPro" id="IPR002132">
    <property type="entry name" value="Ribosomal_uL5"/>
</dbReference>
<dbReference type="InterPro" id="IPR020930">
    <property type="entry name" value="Ribosomal_uL5_bac-type"/>
</dbReference>
<dbReference type="InterPro" id="IPR031309">
    <property type="entry name" value="Ribosomal_uL5_C"/>
</dbReference>
<dbReference type="InterPro" id="IPR020929">
    <property type="entry name" value="Ribosomal_uL5_CS"/>
</dbReference>
<dbReference type="InterPro" id="IPR022803">
    <property type="entry name" value="Ribosomal_uL5_dom_sf"/>
</dbReference>
<dbReference type="InterPro" id="IPR031310">
    <property type="entry name" value="Ribosomal_uL5_N"/>
</dbReference>
<dbReference type="NCBIfam" id="NF000585">
    <property type="entry name" value="PRK00010.1"/>
    <property type="match status" value="1"/>
</dbReference>
<dbReference type="PANTHER" id="PTHR11994">
    <property type="entry name" value="60S RIBOSOMAL PROTEIN L11-RELATED"/>
    <property type="match status" value="1"/>
</dbReference>
<dbReference type="Pfam" id="PF00281">
    <property type="entry name" value="Ribosomal_L5"/>
    <property type="match status" value="1"/>
</dbReference>
<dbReference type="Pfam" id="PF00673">
    <property type="entry name" value="Ribosomal_L5_C"/>
    <property type="match status" value="1"/>
</dbReference>
<dbReference type="PIRSF" id="PIRSF002161">
    <property type="entry name" value="Ribosomal_L5"/>
    <property type="match status" value="1"/>
</dbReference>
<dbReference type="SUPFAM" id="SSF55282">
    <property type="entry name" value="RL5-like"/>
    <property type="match status" value="1"/>
</dbReference>
<dbReference type="PROSITE" id="PS00358">
    <property type="entry name" value="RIBOSOMAL_L5"/>
    <property type="match status" value="1"/>
</dbReference>
<organism>
    <name type="scientific">Geobacillus thermodenitrificans (strain NG80-2)</name>
    <dbReference type="NCBI Taxonomy" id="420246"/>
    <lineage>
        <taxon>Bacteria</taxon>
        <taxon>Bacillati</taxon>
        <taxon>Bacillota</taxon>
        <taxon>Bacilli</taxon>
        <taxon>Bacillales</taxon>
        <taxon>Anoxybacillaceae</taxon>
        <taxon>Geobacillus</taxon>
    </lineage>
</organism>
<accession>A4IJK0</accession>
<feature type="chain" id="PRO_1000052741" description="Large ribosomal subunit protein uL5">
    <location>
        <begin position="1"/>
        <end position="179"/>
    </location>
</feature>
<evidence type="ECO:0000255" key="1">
    <source>
        <dbReference type="HAMAP-Rule" id="MF_01333"/>
    </source>
</evidence>
<evidence type="ECO:0000305" key="2"/>
<keyword id="KW-0687">Ribonucleoprotein</keyword>
<keyword id="KW-0689">Ribosomal protein</keyword>
<keyword id="KW-0694">RNA-binding</keyword>
<keyword id="KW-0699">rRNA-binding</keyword>
<keyword id="KW-0820">tRNA-binding</keyword>
<protein>
    <recommendedName>
        <fullName evidence="1">Large ribosomal subunit protein uL5</fullName>
    </recommendedName>
    <alternativeName>
        <fullName evidence="2">50S ribosomal protein L5</fullName>
    </alternativeName>
</protein>
<sequence length="179" mass="20191">MNRLKEKYTKEVVPALMSKFNYKSIMQVPKIEKIVINMGVGDAVQNPKALDSAVEELTLIAGQRPVVTRAKKSIAGFRLRQGMPIGAKVTLRGERMYEFLDKLISVSLPRVRDFRGVSKKAFDGRGNYTLGIKEQLIFPEIDYDKVNKVRGMDIVIVTTANTDEEARELLTLLGMPFQK</sequence>
<name>RL5_GEOTN</name>
<gene>
    <name evidence="1" type="primary">rplE</name>
    <name type="ordered locus">GTNG_0117</name>
</gene>